<dbReference type="EMBL" id="CP001612">
    <property type="protein sequence ID" value="ACP53513.1"/>
    <property type="molecule type" value="Genomic_DNA"/>
</dbReference>
<dbReference type="RefSeq" id="WP_004995678.1">
    <property type="nucleotide sequence ID" value="NC_012633.1"/>
</dbReference>
<dbReference type="SMR" id="C3PNK3"/>
<dbReference type="GeneID" id="95362261"/>
<dbReference type="KEGG" id="raf:RAF_ORF0609"/>
<dbReference type="HOGENOM" id="CLU_148518_0_0_5"/>
<dbReference type="Proteomes" id="UP000002305">
    <property type="component" value="Chromosome"/>
</dbReference>
<dbReference type="GO" id="GO:0022627">
    <property type="term" value="C:cytosolic small ribosomal subunit"/>
    <property type="evidence" value="ECO:0007669"/>
    <property type="project" value="TreeGrafter"/>
</dbReference>
<dbReference type="GO" id="GO:0019843">
    <property type="term" value="F:rRNA binding"/>
    <property type="evidence" value="ECO:0007669"/>
    <property type="project" value="UniProtKB-UniRule"/>
</dbReference>
<dbReference type="GO" id="GO:0003735">
    <property type="term" value="F:structural constituent of ribosome"/>
    <property type="evidence" value="ECO:0007669"/>
    <property type="project" value="InterPro"/>
</dbReference>
<dbReference type="GO" id="GO:0006412">
    <property type="term" value="P:translation"/>
    <property type="evidence" value="ECO:0007669"/>
    <property type="project" value="UniProtKB-UniRule"/>
</dbReference>
<dbReference type="CDD" id="cd00353">
    <property type="entry name" value="Ribosomal_S15p_S13e"/>
    <property type="match status" value="1"/>
</dbReference>
<dbReference type="FunFam" id="1.10.287.10:FF:000002">
    <property type="entry name" value="30S ribosomal protein S15"/>
    <property type="match status" value="1"/>
</dbReference>
<dbReference type="Gene3D" id="6.10.250.3130">
    <property type="match status" value="1"/>
</dbReference>
<dbReference type="Gene3D" id="1.10.287.10">
    <property type="entry name" value="S15/NS1, RNA-binding"/>
    <property type="match status" value="1"/>
</dbReference>
<dbReference type="HAMAP" id="MF_01343_B">
    <property type="entry name" value="Ribosomal_uS15_B"/>
    <property type="match status" value="1"/>
</dbReference>
<dbReference type="InterPro" id="IPR000589">
    <property type="entry name" value="Ribosomal_uS15"/>
</dbReference>
<dbReference type="InterPro" id="IPR005290">
    <property type="entry name" value="Ribosomal_uS15_bac-type"/>
</dbReference>
<dbReference type="InterPro" id="IPR009068">
    <property type="entry name" value="uS15_NS1_RNA-bd_sf"/>
</dbReference>
<dbReference type="NCBIfam" id="TIGR00952">
    <property type="entry name" value="S15_bact"/>
    <property type="match status" value="1"/>
</dbReference>
<dbReference type="PANTHER" id="PTHR23321">
    <property type="entry name" value="RIBOSOMAL PROTEIN S15, BACTERIAL AND ORGANELLAR"/>
    <property type="match status" value="1"/>
</dbReference>
<dbReference type="PANTHER" id="PTHR23321:SF26">
    <property type="entry name" value="SMALL RIBOSOMAL SUBUNIT PROTEIN US15M"/>
    <property type="match status" value="1"/>
</dbReference>
<dbReference type="Pfam" id="PF00312">
    <property type="entry name" value="Ribosomal_S15"/>
    <property type="match status" value="1"/>
</dbReference>
<dbReference type="SMART" id="SM01387">
    <property type="entry name" value="Ribosomal_S15"/>
    <property type="match status" value="1"/>
</dbReference>
<dbReference type="SUPFAM" id="SSF47060">
    <property type="entry name" value="S15/NS1 RNA-binding domain"/>
    <property type="match status" value="1"/>
</dbReference>
<dbReference type="PROSITE" id="PS00362">
    <property type="entry name" value="RIBOSOMAL_S15"/>
    <property type="match status" value="1"/>
</dbReference>
<protein>
    <recommendedName>
        <fullName evidence="1">Small ribosomal subunit protein uS15</fullName>
    </recommendedName>
    <alternativeName>
        <fullName evidence="2">30S ribosomal protein S15</fullName>
    </alternativeName>
</protein>
<reference key="1">
    <citation type="journal article" date="2009" name="BMC Genomics">
        <title>Analysis of the Rickettsia africae genome reveals that virulence acquisition in Rickettsia species may be explained by genome reduction.</title>
        <authorList>
            <person name="Fournier P.-E."/>
            <person name="El Karkouri K."/>
            <person name="Leroy Q."/>
            <person name="Robert C."/>
            <person name="Giumelli B."/>
            <person name="Renesto P."/>
            <person name="Socolovschi C."/>
            <person name="Parola P."/>
            <person name="Audic S."/>
            <person name="Raoult D."/>
        </authorList>
    </citation>
    <scope>NUCLEOTIDE SEQUENCE [LARGE SCALE GENOMIC DNA]</scope>
    <source>
        <strain>ESF-5</strain>
    </source>
</reference>
<proteinExistence type="inferred from homology"/>
<organism>
    <name type="scientific">Rickettsia africae (strain ESF-5)</name>
    <dbReference type="NCBI Taxonomy" id="347255"/>
    <lineage>
        <taxon>Bacteria</taxon>
        <taxon>Pseudomonadati</taxon>
        <taxon>Pseudomonadota</taxon>
        <taxon>Alphaproteobacteria</taxon>
        <taxon>Rickettsiales</taxon>
        <taxon>Rickettsiaceae</taxon>
        <taxon>Rickettsieae</taxon>
        <taxon>Rickettsia</taxon>
        <taxon>spotted fever group</taxon>
    </lineage>
</organism>
<accession>C3PNK3</accession>
<sequence length="91" mass="10594">MSITTERKQQLIKEYAITENDTGSSAVQCAILTERINNLTEHFKSNHKDHTSRRGLLILVGRRRRLLNYIKKNNVSKYLDLISKLGIRKIK</sequence>
<feature type="chain" id="PRO_1000214768" description="Small ribosomal subunit protein uS15">
    <location>
        <begin position="1"/>
        <end position="91"/>
    </location>
</feature>
<keyword id="KW-0687">Ribonucleoprotein</keyword>
<keyword id="KW-0689">Ribosomal protein</keyword>
<keyword id="KW-0694">RNA-binding</keyword>
<keyword id="KW-0699">rRNA-binding</keyword>
<evidence type="ECO:0000255" key="1">
    <source>
        <dbReference type="HAMAP-Rule" id="MF_01343"/>
    </source>
</evidence>
<evidence type="ECO:0000305" key="2"/>
<comment type="function">
    <text evidence="1">One of the primary rRNA binding proteins, it binds directly to 16S rRNA where it helps nucleate assembly of the platform of the 30S subunit by binding and bridging several RNA helices of the 16S rRNA.</text>
</comment>
<comment type="function">
    <text evidence="1">Forms an intersubunit bridge (bridge B4) with the 23S rRNA of the 50S subunit in the ribosome.</text>
</comment>
<comment type="subunit">
    <text evidence="1">Part of the 30S ribosomal subunit. Forms a bridge to the 50S subunit in the 70S ribosome, contacting the 23S rRNA.</text>
</comment>
<comment type="similarity">
    <text evidence="1">Belongs to the universal ribosomal protein uS15 family.</text>
</comment>
<gene>
    <name evidence="1" type="primary">rpsO</name>
    <name type="ordered locus">RAF_ORF0609</name>
</gene>
<name>RS15_RICAE</name>